<sequence>MDVPSSSSSRFSVGSASPSSVLLYAKDLKKWDEFEDLLEERRHISDFKFAMKCYTPPLYRGITPCKPGDIKSIVLSSEEINYVIKQLSRESLTGVDVLREEASEILEEMSHKLRIGAIRFFAFVLSKIFKQIFSKVCVNEEGIQKLQRAVQEHPVVLLPSHRSYIDFLMLSFILYSYDLPVPVIAAGMDFLGMRVVSELLRMSGAFFMRRTFGGNKLYWAVFSEYVKTMLRCGYAPVEFFLEGTRSRAAKTLTPKFGLLNIVMEPFFKREVFDTYFVPISISYDKILEESLYAYEILGVPKPKESTTGLLKARRILSENFGSIHVYFGDPVSLRSLAAGRLNRNTYNLVPRCIPQKQPEDVQAFVTEVAYKMQLLQIENLALSPWLLVVTILLQNQLSMDFDALVEKTLWLKGVTQVFGGFLLWPDNKLPEEVVQSSILLHSNLASLVKDQVVLKMNSGSSQVVNGLVPEHIALLMCSAYRNQLLNIFARPSLVALALHMTPGLRKEDVFSCFSFLRNVFSDEFIFLPGNTLRDFEEGCYLLCKAEAMQMAGKDIILTDKGTAVLQFLTSLFKPFVESYQLLCRYLLHEEDYFGEKEYLVAARKFTRQLLDQGSSQCYDALSSELQKNALAAFVRLGVVEKKKVDSKYVYYVNGPATSKLEEMLGCKKPIGKPATAKL</sequence>
<feature type="chain" id="PRO_0000195247" description="Dihydroxyacetone phosphate acyltransferase">
    <location>
        <begin position="1"/>
        <end position="678"/>
    </location>
</feature>
<feature type="short sequence motif" description="HXXXXD motif" evidence="3">
    <location>
        <begin position="161"/>
        <end position="166"/>
    </location>
</feature>
<feature type="short sequence motif" description="Microbody targeting signal" evidence="5">
    <location>
        <begin position="676"/>
        <end position="678"/>
    </location>
</feature>
<feature type="modified residue" description="Phosphoserine" evidence="14">
    <location>
        <position position="12"/>
    </location>
</feature>
<feature type="modified residue" description="Phosphoserine" evidence="4">
    <location>
        <position position="17"/>
    </location>
</feature>
<feature type="modified residue" description="N6-acetyllysine" evidence="2">
    <location>
        <position position="641"/>
    </location>
</feature>
<organism>
    <name type="scientific">Mus musculus</name>
    <name type="common">Mouse</name>
    <dbReference type="NCBI Taxonomy" id="10090"/>
    <lineage>
        <taxon>Eukaryota</taxon>
        <taxon>Metazoa</taxon>
        <taxon>Chordata</taxon>
        <taxon>Craniata</taxon>
        <taxon>Vertebrata</taxon>
        <taxon>Euteleostomi</taxon>
        <taxon>Mammalia</taxon>
        <taxon>Eutheria</taxon>
        <taxon>Euarchontoglires</taxon>
        <taxon>Glires</taxon>
        <taxon>Rodentia</taxon>
        <taxon>Myomorpha</taxon>
        <taxon>Muroidea</taxon>
        <taxon>Muridae</taxon>
        <taxon>Murinae</taxon>
        <taxon>Mus</taxon>
        <taxon>Mus</taxon>
    </lineage>
</organism>
<accession>P98192</accession>
<accession>Q9WUT6</accession>
<comment type="function">
    <text evidence="8">Dihydroxyacetonephosphate acyltransferase catalyzing the first step in the biosynthesis of plasmalogens, a subset of phospholipids that differ from other glycerolipids by having an alkyl chain attached through a vinyl ether linkage at the sn-1 position of the glycerol backbone, and which unique physical properties have an impact on various aspects of cell signaling and membrane biology.</text>
</comment>
<comment type="catalytic activity">
    <reaction evidence="6 8">
        <text>dihydroxyacetone phosphate + an acyl-CoA = a 1-acylglycerone 3-phosphate + CoA</text>
        <dbReference type="Rhea" id="RHEA:17657"/>
        <dbReference type="ChEBI" id="CHEBI:57287"/>
        <dbReference type="ChEBI" id="CHEBI:57534"/>
        <dbReference type="ChEBI" id="CHEBI:57642"/>
        <dbReference type="ChEBI" id="CHEBI:58342"/>
        <dbReference type="EC" id="2.3.1.42"/>
    </reaction>
    <physiologicalReaction direction="left-to-right" evidence="6 8">
        <dbReference type="Rhea" id="RHEA:17658"/>
    </physiologicalReaction>
</comment>
<comment type="catalytic activity">
    <reaction evidence="6 8">
        <text>dihydroxyacetone phosphate + hexadecanoyl-CoA = 1-hexadecanoylglycerone 3-phosphate + CoA</text>
        <dbReference type="Rhea" id="RHEA:40715"/>
        <dbReference type="ChEBI" id="CHEBI:57287"/>
        <dbReference type="ChEBI" id="CHEBI:57379"/>
        <dbReference type="ChEBI" id="CHEBI:57642"/>
        <dbReference type="ChEBI" id="CHEBI:58303"/>
    </reaction>
    <physiologicalReaction direction="left-to-right" evidence="8">
        <dbReference type="Rhea" id="RHEA:40716"/>
    </physiologicalReaction>
</comment>
<comment type="pathway">
    <text evidence="8">Membrane lipid metabolism; glycerophospholipid metabolism.</text>
</comment>
<comment type="subunit">
    <text evidence="1">Part of a heterotrimeric complex composed of GNPAT, AGPS and a modified form of GNPAT.</text>
</comment>
<comment type="subcellular location">
    <subcellularLocation>
        <location evidence="7">Peroxisome membrane</location>
        <topology evidence="4">Peripheral membrane protein</topology>
        <orientation evidence="4">Matrix side</orientation>
    </subcellularLocation>
    <text evidence="4">Exclusively localized to the lumenal side of the peroxisomal membrane.</text>
</comment>
<comment type="tissue specificity">
    <text evidence="6">Highly expressed in liver and testis. Lower levels in heart, brain, lung and kidney. Detected in spleen.</text>
</comment>
<comment type="domain">
    <text evidence="3">The HXXXXD motif is essential for acyltransferase activity and may constitute the binding site for the phosphate moiety of the glycerol-3-phosphate.</text>
</comment>
<comment type="disruption phenotype">
    <text evidence="8">Homozygous knockout mice are viable, but display a marked variability in lifespan (PubMed:12874108). Multiple abnormalities are observed, such as male infertility, defects in eye development, cataract and optic nerve hypoplasia. Plasmalogens are completely absent or in reduced amount (PubMed:12874108).</text>
</comment>
<comment type="similarity">
    <text evidence="10">Belongs to the GPAT/DAPAT family.</text>
</comment>
<reference key="1">
    <citation type="journal article" date="1999" name="Biochim. Biophys. Acta">
        <title>Identification and characterization of the mouse cDNA encoding acyl-CoA:dihydroxyacetone phosphate acyltransferase.</title>
        <authorList>
            <person name="Ofman R."/>
            <person name="Hogenhout E.M."/>
            <person name="Wanders R.J.A."/>
        </authorList>
    </citation>
    <scope>NUCLEOTIDE SEQUENCE [MRNA]</scope>
    <scope>CATALYTIC ACTIVITY</scope>
    <scope>TISSUE SPECIFICITY</scope>
    <source>
        <strain>BALB/cJ</strain>
        <tissue>Fibroblast</tissue>
    </source>
</reference>
<reference key="2">
    <citation type="journal article" date="1999" name="FEBS Lett.">
        <title>Synthesis of plasmalogens in eye lens epithelial cells.</title>
        <authorList>
            <person name="Thai T.P."/>
            <person name="Rodemer C."/>
            <person name="Worsch J."/>
            <person name="Hunziker A."/>
            <person name="Gorgas K."/>
            <person name="Just W.W."/>
        </authorList>
    </citation>
    <scope>NUCLEOTIDE SEQUENCE [MRNA]</scope>
    <scope>SUBCELLULAR LOCATION</scope>
</reference>
<reference key="3">
    <citation type="journal article" date="2003" name="Hum. Mol. Genet.">
        <title>Inactivation of ether lipid biosynthesis causes male infertility, defects in eye development and optic nerve hypoplasia in mice.</title>
        <authorList>
            <person name="Rodemer C."/>
            <person name="Thai T.P."/>
            <person name="Brugger B."/>
            <person name="Kaercher T."/>
            <person name="Werner H."/>
            <person name="Nave K.A."/>
            <person name="Wieland F."/>
            <person name="Gorgas K."/>
            <person name="Just W.W."/>
        </authorList>
    </citation>
    <scope>FUNCTION</scope>
    <scope>CATALYTIC ACTIVITY</scope>
    <scope>PATHWAY</scope>
    <scope>DISRUPTION PHENOTYPE</scope>
</reference>
<reference key="4">
    <citation type="journal article" date="2010" name="Cell">
        <title>A tissue-specific atlas of mouse protein phosphorylation and expression.</title>
        <authorList>
            <person name="Huttlin E.L."/>
            <person name="Jedrychowski M.P."/>
            <person name="Elias J.E."/>
            <person name="Goswami T."/>
            <person name="Rad R."/>
            <person name="Beausoleil S.A."/>
            <person name="Villen J."/>
            <person name="Haas W."/>
            <person name="Sowa M.E."/>
            <person name="Gygi S.P."/>
        </authorList>
    </citation>
    <scope>PHOSPHORYLATION [LARGE SCALE ANALYSIS] AT SER-12</scope>
    <scope>IDENTIFICATION BY MASS SPECTROMETRY [LARGE SCALE ANALYSIS]</scope>
    <source>
        <tissue>Brown adipose tissue</tissue>
        <tissue>Heart</tissue>
        <tissue>Kidney</tissue>
        <tissue>Lung</tissue>
        <tissue>Spleen</tissue>
        <tissue>Testis</tissue>
    </source>
</reference>
<evidence type="ECO:0000250" key="1">
    <source>
        <dbReference type="UniProtKB" id="G1SPE9"/>
    </source>
</evidence>
<evidence type="ECO:0000250" key="2">
    <source>
        <dbReference type="UniProtKB" id="O15228"/>
    </source>
</evidence>
<evidence type="ECO:0000250" key="3">
    <source>
        <dbReference type="UniProtKB" id="P10349"/>
    </source>
</evidence>
<evidence type="ECO:0000250" key="4">
    <source>
        <dbReference type="UniProtKB" id="Q9ES71"/>
    </source>
</evidence>
<evidence type="ECO:0000255" key="5"/>
<evidence type="ECO:0000269" key="6">
    <source>
    </source>
</evidence>
<evidence type="ECO:0000269" key="7">
    <source>
    </source>
</evidence>
<evidence type="ECO:0000269" key="8">
    <source>
    </source>
</evidence>
<evidence type="ECO:0000303" key="9">
    <source>
    </source>
</evidence>
<evidence type="ECO:0000305" key="10"/>
<evidence type="ECO:0000305" key="11">
    <source>
    </source>
</evidence>
<evidence type="ECO:0000305" key="12">
    <source>
    </source>
</evidence>
<evidence type="ECO:0000312" key="13">
    <source>
        <dbReference type="MGI" id="MGI:1343460"/>
    </source>
</evidence>
<evidence type="ECO:0007744" key="14">
    <source>
    </source>
</evidence>
<keyword id="KW-0007">Acetylation</keyword>
<keyword id="KW-0012">Acyltransferase</keyword>
<keyword id="KW-0472">Membrane</keyword>
<keyword id="KW-0576">Peroxisome</keyword>
<keyword id="KW-0597">Phosphoprotein</keyword>
<keyword id="KW-1185">Reference proteome</keyword>
<keyword id="KW-0808">Transferase</keyword>
<name>GNPAT_MOUSE</name>
<gene>
    <name evidence="13" type="primary">Gnpat</name>
    <name evidence="9" type="synonym">Dhapat</name>
</gene>
<protein>
    <recommendedName>
        <fullName evidence="12">Dihydroxyacetone phosphate acyltransferase</fullName>
        <shortName evidence="2">DAP-AT</shortName>
        <shortName evidence="2">DHAP-AT</shortName>
        <ecNumber evidence="6 8">2.3.1.42</ecNumber>
    </recommendedName>
    <alternativeName>
        <fullName evidence="11">Acyl-CoA:dihydroxyacetonephosphateacyltransferase</fullName>
    </alternativeName>
    <alternativeName>
        <fullName evidence="13">Glycerone-phosphate O-acyltransferase</fullName>
    </alternativeName>
</protein>
<proteinExistence type="evidence at protein level"/>
<dbReference type="EC" id="2.3.1.42" evidence="6 8"/>
<dbReference type="EMBL" id="AF110769">
    <property type="protein sequence ID" value="AAD55351.1"/>
    <property type="molecule type" value="mRNA"/>
</dbReference>
<dbReference type="EMBL" id="AJ132012">
    <property type="protein sequence ID" value="CAB41975.1"/>
    <property type="molecule type" value="mRNA"/>
</dbReference>
<dbReference type="CCDS" id="CCDS22776.1"/>
<dbReference type="RefSeq" id="NP_034452.3">
    <property type="nucleotide sequence ID" value="NM_010322.3"/>
</dbReference>
<dbReference type="SMR" id="P98192"/>
<dbReference type="BioGRID" id="199996">
    <property type="interactions" value="2"/>
</dbReference>
<dbReference type="FunCoup" id="P98192">
    <property type="interactions" value="2732"/>
</dbReference>
<dbReference type="IntAct" id="P98192">
    <property type="interactions" value="2"/>
</dbReference>
<dbReference type="MINT" id="P98192"/>
<dbReference type="STRING" id="10090.ENSMUSP00000034466"/>
<dbReference type="iPTMnet" id="P98192"/>
<dbReference type="PhosphoSitePlus" id="P98192"/>
<dbReference type="jPOST" id="P98192"/>
<dbReference type="PaxDb" id="10090-ENSMUSP00000034466"/>
<dbReference type="PeptideAtlas" id="P98192"/>
<dbReference type="ProteomicsDB" id="267739"/>
<dbReference type="Pumba" id="P98192"/>
<dbReference type="Antibodypedia" id="34685">
    <property type="antibodies" value="273 antibodies from 31 providers"/>
</dbReference>
<dbReference type="DNASU" id="14712"/>
<dbReference type="Ensembl" id="ENSMUST00000034466.10">
    <property type="protein sequence ID" value="ENSMUSP00000034466.4"/>
    <property type="gene ID" value="ENSMUSG00000031985.10"/>
</dbReference>
<dbReference type="GeneID" id="14712"/>
<dbReference type="KEGG" id="mmu:14712"/>
<dbReference type="UCSC" id="uc009nxv.2">
    <property type="organism name" value="mouse"/>
</dbReference>
<dbReference type="AGR" id="MGI:1343460"/>
<dbReference type="CTD" id="8443"/>
<dbReference type="MGI" id="MGI:1343460">
    <property type="gene designation" value="Gnpat"/>
</dbReference>
<dbReference type="VEuPathDB" id="HostDB:ENSMUSG00000031985"/>
<dbReference type="eggNOG" id="KOG3730">
    <property type="taxonomic scope" value="Eukaryota"/>
</dbReference>
<dbReference type="GeneTree" id="ENSGT00520000055570"/>
<dbReference type="InParanoid" id="P98192"/>
<dbReference type="OMA" id="RFNLEWY"/>
<dbReference type="OrthoDB" id="10255570at2759"/>
<dbReference type="PhylomeDB" id="P98192"/>
<dbReference type="TreeFam" id="TF313360"/>
<dbReference type="Reactome" id="R-MMU-1483166">
    <property type="pathway name" value="Synthesis of PA"/>
</dbReference>
<dbReference type="Reactome" id="R-MMU-75896">
    <property type="pathway name" value="Plasmalogen biosynthesis"/>
</dbReference>
<dbReference type="Reactome" id="R-MMU-9033241">
    <property type="pathway name" value="Peroxisomal protein import"/>
</dbReference>
<dbReference type="UniPathway" id="UPA00940"/>
<dbReference type="BioGRID-ORCS" id="14712">
    <property type="hits" value="4 hits in 78 CRISPR screens"/>
</dbReference>
<dbReference type="CD-CODE" id="CE726F99">
    <property type="entry name" value="Postsynaptic density"/>
</dbReference>
<dbReference type="ChiTaRS" id="Gnpat">
    <property type="organism name" value="mouse"/>
</dbReference>
<dbReference type="PRO" id="PR:P98192"/>
<dbReference type="Proteomes" id="UP000000589">
    <property type="component" value="Chromosome 8"/>
</dbReference>
<dbReference type="RNAct" id="P98192">
    <property type="molecule type" value="protein"/>
</dbReference>
<dbReference type="Bgee" id="ENSMUSG00000031985">
    <property type="expression patterns" value="Expressed in embryonic post-anal tail and 274 other cell types or tissues"/>
</dbReference>
<dbReference type="ExpressionAtlas" id="P98192">
    <property type="expression patterns" value="baseline and differential"/>
</dbReference>
<dbReference type="GO" id="GO:0030054">
    <property type="term" value="C:cell junction"/>
    <property type="evidence" value="ECO:0007669"/>
    <property type="project" value="Ensembl"/>
</dbReference>
<dbReference type="GO" id="GO:0005782">
    <property type="term" value="C:peroxisomal matrix"/>
    <property type="evidence" value="ECO:0000304"/>
    <property type="project" value="MGI"/>
</dbReference>
<dbReference type="GO" id="GO:0005778">
    <property type="term" value="C:peroxisomal membrane"/>
    <property type="evidence" value="ECO:0007669"/>
    <property type="project" value="UniProtKB-SubCell"/>
</dbReference>
<dbReference type="GO" id="GO:0005777">
    <property type="term" value="C:peroxisome"/>
    <property type="evidence" value="ECO:0000314"/>
    <property type="project" value="UniProtKB"/>
</dbReference>
<dbReference type="GO" id="GO:0003824">
    <property type="term" value="F:catalytic activity"/>
    <property type="evidence" value="ECO:0000314"/>
    <property type="project" value="MGI"/>
</dbReference>
<dbReference type="GO" id="GO:0016287">
    <property type="term" value="F:glycerone-phosphate O-acyltransferase activity"/>
    <property type="evidence" value="ECO:0000314"/>
    <property type="project" value="UniProtKB"/>
</dbReference>
<dbReference type="GO" id="GO:0021587">
    <property type="term" value="P:cerebellum morphogenesis"/>
    <property type="evidence" value="ECO:0000315"/>
    <property type="project" value="MGI"/>
</dbReference>
<dbReference type="GO" id="GO:0008611">
    <property type="term" value="P:ether lipid biosynthetic process"/>
    <property type="evidence" value="ECO:0000315"/>
    <property type="project" value="MGI"/>
</dbReference>
<dbReference type="GO" id="GO:0006650">
    <property type="term" value="P:glycerophospholipid metabolic process"/>
    <property type="evidence" value="ECO:0007669"/>
    <property type="project" value="UniProtKB-UniPathway"/>
</dbReference>
<dbReference type="GO" id="GO:0061024">
    <property type="term" value="P:membrane organization"/>
    <property type="evidence" value="ECO:0000315"/>
    <property type="project" value="MGI"/>
</dbReference>
<dbReference type="GO" id="GO:0042552">
    <property type="term" value="P:myelination"/>
    <property type="evidence" value="ECO:0000315"/>
    <property type="project" value="MGI"/>
</dbReference>
<dbReference type="GO" id="GO:0030913">
    <property type="term" value="P:paranodal junction assembly"/>
    <property type="evidence" value="ECO:0000315"/>
    <property type="project" value="MGI"/>
</dbReference>
<dbReference type="GO" id="GO:0007416">
    <property type="term" value="P:synapse assembly"/>
    <property type="evidence" value="ECO:0000315"/>
    <property type="project" value="MGI"/>
</dbReference>
<dbReference type="CDD" id="cd07993">
    <property type="entry name" value="LPLAT_DHAPAT-like"/>
    <property type="match status" value="1"/>
</dbReference>
<dbReference type="InterPro" id="IPR028353">
    <property type="entry name" value="DHAPAT"/>
</dbReference>
<dbReference type="InterPro" id="IPR022284">
    <property type="entry name" value="GPAT/DHAPAT"/>
</dbReference>
<dbReference type="InterPro" id="IPR045520">
    <property type="entry name" value="GPAT/DHAPAT_C"/>
</dbReference>
<dbReference type="InterPro" id="IPR041728">
    <property type="entry name" value="GPAT/DHAPAT_LPLAT"/>
</dbReference>
<dbReference type="InterPro" id="IPR002123">
    <property type="entry name" value="Plipid/glycerol_acylTrfase"/>
</dbReference>
<dbReference type="PANTHER" id="PTHR12563:SF17">
    <property type="entry name" value="DIHYDROXYACETONE PHOSPHATE ACYLTRANSFERASE"/>
    <property type="match status" value="1"/>
</dbReference>
<dbReference type="PANTHER" id="PTHR12563">
    <property type="entry name" value="GLYCEROL-3-PHOSPHATE ACYLTRANSFERASE"/>
    <property type="match status" value="1"/>
</dbReference>
<dbReference type="Pfam" id="PF01553">
    <property type="entry name" value="Acyltransferase"/>
    <property type="match status" value="1"/>
</dbReference>
<dbReference type="Pfam" id="PF19277">
    <property type="entry name" value="GPAT_C"/>
    <property type="match status" value="1"/>
</dbReference>
<dbReference type="PIRSF" id="PIRSF500063">
    <property type="entry name" value="DHAPAT"/>
    <property type="match status" value="1"/>
</dbReference>
<dbReference type="PIRSF" id="PIRSF000437">
    <property type="entry name" value="GPAT_DHAPAT"/>
    <property type="match status" value="1"/>
</dbReference>
<dbReference type="SMART" id="SM00563">
    <property type="entry name" value="PlsC"/>
    <property type="match status" value="1"/>
</dbReference>
<dbReference type="SUPFAM" id="SSF69593">
    <property type="entry name" value="Glycerol-3-phosphate (1)-acyltransferase"/>
    <property type="match status" value="1"/>
</dbReference>